<dbReference type="EC" id="6.1.1.6" evidence="1"/>
<dbReference type="EMBL" id="CP000422">
    <property type="protein sequence ID" value="ABJ68563.1"/>
    <property type="molecule type" value="Genomic_DNA"/>
</dbReference>
<dbReference type="RefSeq" id="WP_002833036.1">
    <property type="nucleotide sequence ID" value="NC_008525.1"/>
</dbReference>
<dbReference type="SMR" id="Q03E09"/>
<dbReference type="STRING" id="278197.PEPE_1542"/>
<dbReference type="GeneID" id="33062123"/>
<dbReference type="KEGG" id="ppe:PEPE_1542"/>
<dbReference type="eggNOG" id="COG1190">
    <property type="taxonomic scope" value="Bacteria"/>
</dbReference>
<dbReference type="HOGENOM" id="CLU_008255_6_2_9"/>
<dbReference type="OrthoDB" id="9801152at2"/>
<dbReference type="Proteomes" id="UP000000773">
    <property type="component" value="Chromosome"/>
</dbReference>
<dbReference type="GO" id="GO:0005829">
    <property type="term" value="C:cytosol"/>
    <property type="evidence" value="ECO:0007669"/>
    <property type="project" value="TreeGrafter"/>
</dbReference>
<dbReference type="GO" id="GO:0005524">
    <property type="term" value="F:ATP binding"/>
    <property type="evidence" value="ECO:0007669"/>
    <property type="project" value="UniProtKB-UniRule"/>
</dbReference>
<dbReference type="GO" id="GO:0140096">
    <property type="term" value="F:catalytic activity, acting on a protein"/>
    <property type="evidence" value="ECO:0007669"/>
    <property type="project" value="UniProtKB-ARBA"/>
</dbReference>
<dbReference type="GO" id="GO:0004824">
    <property type="term" value="F:lysine-tRNA ligase activity"/>
    <property type="evidence" value="ECO:0007669"/>
    <property type="project" value="UniProtKB-UniRule"/>
</dbReference>
<dbReference type="GO" id="GO:0000287">
    <property type="term" value="F:magnesium ion binding"/>
    <property type="evidence" value="ECO:0007669"/>
    <property type="project" value="UniProtKB-UniRule"/>
</dbReference>
<dbReference type="GO" id="GO:0016740">
    <property type="term" value="F:transferase activity"/>
    <property type="evidence" value="ECO:0007669"/>
    <property type="project" value="UniProtKB-ARBA"/>
</dbReference>
<dbReference type="GO" id="GO:0000049">
    <property type="term" value="F:tRNA binding"/>
    <property type="evidence" value="ECO:0007669"/>
    <property type="project" value="TreeGrafter"/>
</dbReference>
<dbReference type="GO" id="GO:0006430">
    <property type="term" value="P:lysyl-tRNA aminoacylation"/>
    <property type="evidence" value="ECO:0007669"/>
    <property type="project" value="UniProtKB-UniRule"/>
</dbReference>
<dbReference type="CDD" id="cd00775">
    <property type="entry name" value="LysRS_core"/>
    <property type="match status" value="1"/>
</dbReference>
<dbReference type="CDD" id="cd04322">
    <property type="entry name" value="LysRS_N"/>
    <property type="match status" value="1"/>
</dbReference>
<dbReference type="FunFam" id="2.40.50.140:FF:000024">
    <property type="entry name" value="Lysine--tRNA ligase"/>
    <property type="match status" value="1"/>
</dbReference>
<dbReference type="FunFam" id="3.30.930.10:FF:000001">
    <property type="entry name" value="Lysine--tRNA ligase"/>
    <property type="match status" value="1"/>
</dbReference>
<dbReference type="Gene3D" id="3.30.930.10">
    <property type="entry name" value="Bira Bifunctional Protein, Domain 2"/>
    <property type="match status" value="1"/>
</dbReference>
<dbReference type="Gene3D" id="2.40.50.140">
    <property type="entry name" value="Nucleic acid-binding proteins"/>
    <property type="match status" value="1"/>
</dbReference>
<dbReference type="HAMAP" id="MF_00252">
    <property type="entry name" value="Lys_tRNA_synth_class2"/>
    <property type="match status" value="1"/>
</dbReference>
<dbReference type="InterPro" id="IPR004364">
    <property type="entry name" value="Aa-tRNA-synt_II"/>
</dbReference>
<dbReference type="InterPro" id="IPR006195">
    <property type="entry name" value="aa-tRNA-synth_II"/>
</dbReference>
<dbReference type="InterPro" id="IPR045864">
    <property type="entry name" value="aa-tRNA-synth_II/BPL/LPL"/>
</dbReference>
<dbReference type="InterPro" id="IPR002313">
    <property type="entry name" value="Lys-tRNA-ligase_II"/>
</dbReference>
<dbReference type="InterPro" id="IPR044136">
    <property type="entry name" value="Lys-tRNA-ligase_II_N"/>
</dbReference>
<dbReference type="InterPro" id="IPR018149">
    <property type="entry name" value="Lys-tRNA-synth_II_C"/>
</dbReference>
<dbReference type="InterPro" id="IPR012340">
    <property type="entry name" value="NA-bd_OB-fold"/>
</dbReference>
<dbReference type="InterPro" id="IPR004365">
    <property type="entry name" value="NA-bd_OB_tRNA"/>
</dbReference>
<dbReference type="NCBIfam" id="TIGR00499">
    <property type="entry name" value="lysS_bact"/>
    <property type="match status" value="1"/>
</dbReference>
<dbReference type="NCBIfam" id="NF001756">
    <property type="entry name" value="PRK00484.1"/>
    <property type="match status" value="1"/>
</dbReference>
<dbReference type="PANTHER" id="PTHR42918:SF15">
    <property type="entry name" value="LYSINE--TRNA LIGASE, CHLOROPLASTIC_MITOCHONDRIAL"/>
    <property type="match status" value="1"/>
</dbReference>
<dbReference type="PANTHER" id="PTHR42918">
    <property type="entry name" value="LYSYL-TRNA SYNTHETASE"/>
    <property type="match status" value="1"/>
</dbReference>
<dbReference type="Pfam" id="PF00152">
    <property type="entry name" value="tRNA-synt_2"/>
    <property type="match status" value="1"/>
</dbReference>
<dbReference type="Pfam" id="PF01336">
    <property type="entry name" value="tRNA_anti-codon"/>
    <property type="match status" value="1"/>
</dbReference>
<dbReference type="PRINTS" id="PR00982">
    <property type="entry name" value="TRNASYNTHLYS"/>
</dbReference>
<dbReference type="SUPFAM" id="SSF55681">
    <property type="entry name" value="Class II aaRS and biotin synthetases"/>
    <property type="match status" value="1"/>
</dbReference>
<dbReference type="SUPFAM" id="SSF50249">
    <property type="entry name" value="Nucleic acid-binding proteins"/>
    <property type="match status" value="1"/>
</dbReference>
<dbReference type="PROSITE" id="PS50862">
    <property type="entry name" value="AA_TRNA_LIGASE_II"/>
    <property type="match status" value="1"/>
</dbReference>
<name>SYK_PEDPA</name>
<comment type="catalytic activity">
    <reaction evidence="1">
        <text>tRNA(Lys) + L-lysine + ATP = L-lysyl-tRNA(Lys) + AMP + diphosphate</text>
        <dbReference type="Rhea" id="RHEA:20792"/>
        <dbReference type="Rhea" id="RHEA-COMP:9696"/>
        <dbReference type="Rhea" id="RHEA-COMP:9697"/>
        <dbReference type="ChEBI" id="CHEBI:30616"/>
        <dbReference type="ChEBI" id="CHEBI:32551"/>
        <dbReference type="ChEBI" id="CHEBI:33019"/>
        <dbReference type="ChEBI" id="CHEBI:78442"/>
        <dbReference type="ChEBI" id="CHEBI:78529"/>
        <dbReference type="ChEBI" id="CHEBI:456215"/>
        <dbReference type="EC" id="6.1.1.6"/>
    </reaction>
</comment>
<comment type="cofactor">
    <cofactor evidence="1">
        <name>Mg(2+)</name>
        <dbReference type="ChEBI" id="CHEBI:18420"/>
    </cofactor>
    <text evidence="1">Binds 3 Mg(2+) ions per subunit.</text>
</comment>
<comment type="subunit">
    <text evidence="1">Homodimer.</text>
</comment>
<comment type="subcellular location">
    <subcellularLocation>
        <location evidence="1">Cytoplasm</location>
    </subcellularLocation>
</comment>
<comment type="similarity">
    <text evidence="1">Belongs to the class-II aminoacyl-tRNA synthetase family.</text>
</comment>
<organism>
    <name type="scientific">Pediococcus pentosaceus (strain ATCC 25745 / CCUG 21536 / LMG 10740 / 183-1w)</name>
    <dbReference type="NCBI Taxonomy" id="278197"/>
    <lineage>
        <taxon>Bacteria</taxon>
        <taxon>Bacillati</taxon>
        <taxon>Bacillota</taxon>
        <taxon>Bacilli</taxon>
        <taxon>Lactobacillales</taxon>
        <taxon>Lactobacillaceae</taxon>
        <taxon>Pediococcus</taxon>
    </lineage>
</organism>
<evidence type="ECO:0000255" key="1">
    <source>
        <dbReference type="HAMAP-Rule" id="MF_00252"/>
    </source>
</evidence>
<keyword id="KW-0030">Aminoacyl-tRNA synthetase</keyword>
<keyword id="KW-0067">ATP-binding</keyword>
<keyword id="KW-0963">Cytoplasm</keyword>
<keyword id="KW-0436">Ligase</keyword>
<keyword id="KW-0460">Magnesium</keyword>
<keyword id="KW-0479">Metal-binding</keyword>
<keyword id="KW-0547">Nucleotide-binding</keyword>
<keyword id="KW-0648">Protein biosynthesis</keyword>
<protein>
    <recommendedName>
        <fullName evidence="1">Lysine--tRNA ligase</fullName>
        <ecNumber evidence="1">6.1.1.6</ecNumber>
    </recommendedName>
    <alternativeName>
        <fullName evidence="1">Lysyl-tRNA synthetase</fullName>
        <shortName evidence="1">LysRS</shortName>
    </alternativeName>
</protein>
<reference key="1">
    <citation type="journal article" date="2006" name="Proc. Natl. Acad. Sci. U.S.A.">
        <title>Comparative genomics of the lactic acid bacteria.</title>
        <authorList>
            <person name="Makarova K.S."/>
            <person name="Slesarev A."/>
            <person name="Wolf Y.I."/>
            <person name="Sorokin A."/>
            <person name="Mirkin B."/>
            <person name="Koonin E.V."/>
            <person name="Pavlov A."/>
            <person name="Pavlova N."/>
            <person name="Karamychev V."/>
            <person name="Polouchine N."/>
            <person name="Shakhova V."/>
            <person name="Grigoriev I."/>
            <person name="Lou Y."/>
            <person name="Rohksar D."/>
            <person name="Lucas S."/>
            <person name="Huang K."/>
            <person name="Goodstein D.M."/>
            <person name="Hawkins T."/>
            <person name="Plengvidhya V."/>
            <person name="Welker D."/>
            <person name="Hughes J."/>
            <person name="Goh Y."/>
            <person name="Benson A."/>
            <person name="Baldwin K."/>
            <person name="Lee J.-H."/>
            <person name="Diaz-Muniz I."/>
            <person name="Dosti B."/>
            <person name="Smeianov V."/>
            <person name="Wechter W."/>
            <person name="Barabote R."/>
            <person name="Lorca G."/>
            <person name="Altermann E."/>
            <person name="Barrangou R."/>
            <person name="Ganesan B."/>
            <person name="Xie Y."/>
            <person name="Rawsthorne H."/>
            <person name="Tamir D."/>
            <person name="Parker C."/>
            <person name="Breidt F."/>
            <person name="Broadbent J.R."/>
            <person name="Hutkins R."/>
            <person name="O'Sullivan D."/>
            <person name="Steele J."/>
            <person name="Unlu G."/>
            <person name="Saier M.H. Jr."/>
            <person name="Klaenhammer T."/>
            <person name="Richardson P."/>
            <person name="Kozyavkin S."/>
            <person name="Weimer B.C."/>
            <person name="Mills D.A."/>
        </authorList>
    </citation>
    <scope>NUCLEOTIDE SEQUENCE [LARGE SCALE GENOMIC DNA]</scope>
    <source>
        <strain>ATCC 25745 / CCUG 21536 / LMG 10740 / 183-1w</strain>
    </source>
</reference>
<accession>Q03E09</accession>
<sequence>MGEKQQPSMNDQLRVRREKMQELRDKGIDPFGHRFERTHLAAQLHEKYSDMTKEELDEQGVVATIAGRMISKRGKGKVGFADLKDRSGKMQLYVRKDVLGEDVYKVFKRSDIGDFLGVTGDVMKTDMGELTIKVTGLTFLSKALRPLPDKFHGLQNVEQIYRQRYLDLIANDDSMDRFRKRTKIVSAVRRYLDGNDFAEVETPVLHTQAGGASARPFITHHNALDINLYLRIALELHLKRLIVGGMERVYEIGRVFRNEGIDTRHNPEFTMLETYAAYFDFHDVMDETEGIFKAAVAAVSDDGKITYQGTELDLGQDFERLHMVDAIKKYAGVDFWPKMSVEDAKKLADENGIHYESWWTVGHIINEFFEEKVQDQLKQPVFIYGHPVEISPLAKKNAEDDRFTDRFELYILGNEYGNAFTELNDPIDQRARFEAQVAEREAGNDEAEGIDEDYIEALEYGMPPTGGLGIGIDRLVMLLTDAPSIRDVLLFPTMKPID</sequence>
<proteinExistence type="inferred from homology"/>
<gene>
    <name evidence="1" type="primary">lysS</name>
    <name type="ordered locus">PEPE_1542</name>
</gene>
<feature type="chain" id="PRO_1000012900" description="Lysine--tRNA ligase">
    <location>
        <begin position="1"/>
        <end position="498"/>
    </location>
</feature>
<feature type="binding site" evidence="1">
    <location>
        <position position="408"/>
    </location>
    <ligand>
        <name>Mg(2+)</name>
        <dbReference type="ChEBI" id="CHEBI:18420"/>
        <label>1</label>
    </ligand>
</feature>
<feature type="binding site" evidence="1">
    <location>
        <position position="415"/>
    </location>
    <ligand>
        <name>Mg(2+)</name>
        <dbReference type="ChEBI" id="CHEBI:18420"/>
        <label>1</label>
    </ligand>
</feature>
<feature type="binding site" evidence="1">
    <location>
        <position position="415"/>
    </location>
    <ligand>
        <name>Mg(2+)</name>
        <dbReference type="ChEBI" id="CHEBI:18420"/>
        <label>2</label>
    </ligand>
</feature>